<reference key="1">
    <citation type="journal article" date="2009" name="J. Bacteriol.">
        <title>Genomic sequencing reveals regulatory mutations and recombinational events in the widely used MC4100 lineage of Escherichia coli K-12.</title>
        <authorList>
            <person name="Ferenci T."/>
            <person name="Zhou Z."/>
            <person name="Betteridge T."/>
            <person name="Ren Y."/>
            <person name="Liu Y."/>
            <person name="Feng L."/>
            <person name="Reeves P.R."/>
            <person name="Wang L."/>
        </authorList>
    </citation>
    <scope>NUCLEOTIDE SEQUENCE [LARGE SCALE GENOMIC DNA]</scope>
    <source>
        <strain>K12 / MC4100 / BW2952</strain>
    </source>
</reference>
<keyword id="KW-0010">Activator</keyword>
<keyword id="KW-0067">ATP-binding</keyword>
<keyword id="KW-0119">Carbohydrate metabolism</keyword>
<keyword id="KW-0238">DNA-binding</keyword>
<keyword id="KW-0547">Nucleotide-binding</keyword>
<keyword id="KW-0804">Transcription</keyword>
<keyword id="KW-0805">Transcription regulation</keyword>
<proteinExistence type="inferred from homology"/>
<comment type="function">
    <text evidence="1">Positively regulates the transcription of the maltose regulon whose gene products are responsible for uptake and catabolism of malto-oligosaccharides. Specifically binds to the promoter region of its target genes, recognizing a short DNA motif called the MalT box.</text>
</comment>
<comment type="activity regulation">
    <text evidence="1">Activated by ATP and maltotriose, which are both required for DNA binding.</text>
</comment>
<comment type="subunit">
    <text evidence="1">Monomer in solution. Oligomerizes to an active state in the presence of the positive effectors ATP and maltotriose.</text>
</comment>
<comment type="similarity">
    <text evidence="1">Belongs to the MalT family.</text>
</comment>
<dbReference type="EMBL" id="CP001396">
    <property type="protein sequence ID" value="ACR63176.1"/>
    <property type="molecule type" value="Genomic_DNA"/>
</dbReference>
<dbReference type="RefSeq" id="WP_000906961.1">
    <property type="nucleotide sequence ID" value="NC_012759.1"/>
</dbReference>
<dbReference type="SMR" id="C4ZVX0"/>
<dbReference type="KEGG" id="ebw:BWG_3112"/>
<dbReference type="HOGENOM" id="CLU_006325_3_0_6"/>
<dbReference type="GO" id="GO:0005524">
    <property type="term" value="F:ATP binding"/>
    <property type="evidence" value="ECO:0007669"/>
    <property type="project" value="UniProtKB-UniRule"/>
</dbReference>
<dbReference type="GO" id="GO:0003677">
    <property type="term" value="F:DNA binding"/>
    <property type="evidence" value="ECO:0007669"/>
    <property type="project" value="UniProtKB-KW"/>
</dbReference>
<dbReference type="GO" id="GO:0003700">
    <property type="term" value="F:DNA-binding transcription factor activity"/>
    <property type="evidence" value="ECO:0007669"/>
    <property type="project" value="UniProtKB-UniRule"/>
</dbReference>
<dbReference type="GO" id="GO:0045913">
    <property type="term" value="P:positive regulation of carbohydrate metabolic process"/>
    <property type="evidence" value="ECO:0007669"/>
    <property type="project" value="UniProtKB-UniRule"/>
</dbReference>
<dbReference type="GO" id="GO:0045893">
    <property type="term" value="P:positive regulation of DNA-templated transcription"/>
    <property type="evidence" value="ECO:0007669"/>
    <property type="project" value="UniProtKB-UniRule"/>
</dbReference>
<dbReference type="CDD" id="cd06170">
    <property type="entry name" value="LuxR_C_like"/>
    <property type="match status" value="1"/>
</dbReference>
<dbReference type="FunFam" id="1.10.10.10:FF:000115">
    <property type="entry name" value="HTH-type transcriptional regulator MalT"/>
    <property type="match status" value="1"/>
</dbReference>
<dbReference type="FunFam" id="1.25.40.10:FF:000086">
    <property type="entry name" value="HTH-type transcriptional regulator MalT"/>
    <property type="match status" value="1"/>
</dbReference>
<dbReference type="Gene3D" id="3.40.50.300">
    <property type="entry name" value="P-loop containing nucleotide triphosphate hydrolases"/>
    <property type="match status" value="1"/>
</dbReference>
<dbReference type="Gene3D" id="1.25.40.10">
    <property type="entry name" value="Tetratricopeptide repeat domain"/>
    <property type="match status" value="1"/>
</dbReference>
<dbReference type="Gene3D" id="1.10.10.10">
    <property type="entry name" value="Winged helix-like DNA-binding domain superfamily/Winged helix DNA-binding domain"/>
    <property type="match status" value="1"/>
</dbReference>
<dbReference type="HAMAP" id="MF_01247">
    <property type="entry name" value="HTH_type_MalT"/>
    <property type="match status" value="1"/>
</dbReference>
<dbReference type="InterPro" id="IPR027417">
    <property type="entry name" value="P-loop_NTPase"/>
</dbReference>
<dbReference type="InterPro" id="IPR016032">
    <property type="entry name" value="Sig_transdc_resp-reg_C-effctor"/>
</dbReference>
<dbReference type="InterPro" id="IPR011990">
    <property type="entry name" value="TPR-like_helical_dom_sf"/>
</dbReference>
<dbReference type="InterPro" id="IPR041617">
    <property type="entry name" value="TPR_MalT"/>
</dbReference>
<dbReference type="InterPro" id="IPR023768">
    <property type="entry name" value="Tscrpt_reg_HTH_MalT"/>
</dbReference>
<dbReference type="InterPro" id="IPR000792">
    <property type="entry name" value="Tscrpt_reg_LuxR_C"/>
</dbReference>
<dbReference type="InterPro" id="IPR036388">
    <property type="entry name" value="WH-like_DNA-bd_sf"/>
</dbReference>
<dbReference type="NCBIfam" id="NF003420">
    <property type="entry name" value="PRK04841.1"/>
    <property type="match status" value="1"/>
</dbReference>
<dbReference type="PANTHER" id="PTHR44688">
    <property type="entry name" value="DNA-BINDING TRANSCRIPTIONAL ACTIVATOR DEVR_DOSR"/>
    <property type="match status" value="1"/>
</dbReference>
<dbReference type="PANTHER" id="PTHR44688:SF16">
    <property type="entry name" value="DNA-BINDING TRANSCRIPTIONAL ACTIVATOR DEVR_DOSR"/>
    <property type="match status" value="1"/>
</dbReference>
<dbReference type="Pfam" id="PF00196">
    <property type="entry name" value="GerE"/>
    <property type="match status" value="1"/>
</dbReference>
<dbReference type="Pfam" id="PF17874">
    <property type="entry name" value="TPR_MalT"/>
    <property type="match status" value="1"/>
</dbReference>
<dbReference type="PRINTS" id="PR00038">
    <property type="entry name" value="HTHLUXR"/>
</dbReference>
<dbReference type="SMART" id="SM00421">
    <property type="entry name" value="HTH_LUXR"/>
    <property type="match status" value="1"/>
</dbReference>
<dbReference type="SUPFAM" id="SSF46894">
    <property type="entry name" value="C-terminal effector domain of the bipartite response regulators"/>
    <property type="match status" value="1"/>
</dbReference>
<dbReference type="SUPFAM" id="SSF52540">
    <property type="entry name" value="P-loop containing nucleoside triphosphate hydrolases"/>
    <property type="match status" value="1"/>
</dbReference>
<dbReference type="SUPFAM" id="SSF48452">
    <property type="entry name" value="TPR-like"/>
    <property type="match status" value="1"/>
</dbReference>
<dbReference type="PROSITE" id="PS00622">
    <property type="entry name" value="HTH_LUXR_1"/>
    <property type="match status" value="1"/>
</dbReference>
<dbReference type="PROSITE" id="PS50043">
    <property type="entry name" value="HTH_LUXR_2"/>
    <property type="match status" value="1"/>
</dbReference>
<protein>
    <recommendedName>
        <fullName evidence="1">HTH-type transcriptional regulator MalT</fullName>
    </recommendedName>
    <alternativeName>
        <fullName evidence="1">ATP-dependent transcriptional activator MalT</fullName>
    </alternativeName>
</protein>
<accession>C4ZVX0</accession>
<evidence type="ECO:0000255" key="1">
    <source>
        <dbReference type="HAMAP-Rule" id="MF_01247"/>
    </source>
</evidence>
<organism>
    <name type="scientific">Escherichia coli (strain K12 / MC4100 / BW2952)</name>
    <dbReference type="NCBI Taxonomy" id="595496"/>
    <lineage>
        <taxon>Bacteria</taxon>
        <taxon>Pseudomonadati</taxon>
        <taxon>Pseudomonadota</taxon>
        <taxon>Gammaproteobacteria</taxon>
        <taxon>Enterobacterales</taxon>
        <taxon>Enterobacteriaceae</taxon>
        <taxon>Escherichia</taxon>
    </lineage>
</organism>
<sequence length="901" mass="103118">MLIPSKLSRPVRLDHTVVRERLLAKLSGANNFRLALITSPAGYGKTTLISQWAAGKNDIGWYSLDEGDNQQERFASYLIAAVQQATNGHCAICETMAQKRQYASLTSLFAQLFIELAEWHSPLYLVIDDYHLITNPVIHESMRFFIRHQPENLTLVVLSRNLPQLGIANLRVRDQLLEIGSQQLAFTHQEAKQFFDCRLSSPIEAAESSRICDDVSGWATALQLIALSARQNTHSAHKSARRLAGINASHLSDYLVDEVLDNVDLATRHFLLKSAILRSMNDALITRVTGEENGQMRLEEIERQGLFLQRMDDTGEWFCYHPLFGNFLRQRCQWELAAELPEIHRAAAESWMAQGFPSEAIHHALAAGDALMLRDILLNHAWSLFNHSELSLLEESLKALPWDSLLENPQLVLLQAWLMQSQHRYGEVNTLLARAEHEIKDIREDTMHAEFNALRAQVAINDGNPDEAERLAKLALEELPPGWFYSRIVATSVLGEVLHCKGELTRSLALMQQTEQMARQHDVWHYALWSLIQQSEILFAQGFLQTAWETQEKAFQLINEQHLEQLPMHEFLVRIRAQLLWAWARLDEAEASARSGIEVLSSYQPQQQLQCLAMLIQCSLARGDLDNARSQLNRLENLLGNGKYHSDWISNANKVRVIYWQMTGDKAAAANWLRHTAKPEFANNHFLQGQWRNIARAQILLGEFEPAEIVLEELNENARSLRLMSDLNRNLLLLNQLYWQAGRKSDAQRVLLDALKLANRTGFISHFVIEGEAMAQQLRQLIQLNTLPELEQHRAQRILREINQHHRHKFAHFDENFVERLLNHPEVPELIRTSPLTQREWQVLGLIYSGYSNEQIAGELEVAATTIKTHIRNLYQKLGVAHRQDAVQHAQQLLKMMGYGV</sequence>
<name>MALT_ECOBW</name>
<gene>
    <name evidence="1" type="primary">malT</name>
    <name type="ordered locus">BWG_3112</name>
</gene>
<feature type="chain" id="PRO_1000214103" description="HTH-type transcriptional regulator MalT">
    <location>
        <begin position="1"/>
        <end position="901"/>
    </location>
</feature>
<feature type="domain" description="HTH luxR-type" evidence="1">
    <location>
        <begin position="829"/>
        <end position="894"/>
    </location>
</feature>
<feature type="DNA-binding region" description="H-T-H motif" evidence="1">
    <location>
        <begin position="853"/>
        <end position="872"/>
    </location>
</feature>
<feature type="binding site" evidence="1">
    <location>
        <begin position="39"/>
        <end position="46"/>
    </location>
    <ligand>
        <name>ATP</name>
        <dbReference type="ChEBI" id="CHEBI:30616"/>
    </ligand>
</feature>